<accession>P43160</accession>
<name>MPRR1_STRCH</name>
<protein>
    <recommendedName>
        <fullName>Small neutral protease regulatory protein</fullName>
    </recommendedName>
</protein>
<organism>
    <name type="scientific">Streptomyces coelicolor</name>
    <dbReference type="NCBI Taxonomy" id="1902"/>
    <lineage>
        <taxon>Bacteria</taxon>
        <taxon>Bacillati</taxon>
        <taxon>Actinomycetota</taxon>
        <taxon>Actinomycetes</taxon>
        <taxon>Kitasatosporales</taxon>
        <taxon>Streptomycetaceae</taxon>
        <taxon>Streptomyces</taxon>
        <taxon>Streptomyces albidoflavus group</taxon>
    </lineage>
</organism>
<gene>
    <name type="primary">mprR</name>
</gene>
<sequence>MRHLRALCAIADTGSVRRAARELGVSQPALTTQLRRIEQSLGAELFHRGRDGCRPTLLGRTVLSRARTVVDSMAVLVEEARAEAAALGRPGPRLRVGSTASRIVGDWLRRLRGRMPETDITLQVDVSATVLLRCCAPAALDLAFVHEVEGSPLRVPDGLVQHTLLEREPQFISLAPDHPAAARPVVDLADLAQDRWMVDPSVDGEWDGVRRVLAAAGIDPPVLHGDYLTTASLVALGEAVAPCQPTSGPRDDMVIRPLRDDPLAVRLLLVTPPRCPAAGPAYEELTAAYAAAALRAGPYREWLEGAPERPGALLGG</sequence>
<proteinExistence type="inferred from homology"/>
<feature type="chain" id="PRO_0000105683" description="Small neutral protease regulatory protein">
    <location>
        <begin position="1"/>
        <end position="316"/>
    </location>
</feature>
<feature type="domain" description="HTH lysR-type" evidence="1">
    <location>
        <begin position="1"/>
        <end position="56"/>
    </location>
</feature>
<feature type="DNA-binding region" description="H-T-H motif" evidence="1">
    <location>
        <begin position="16"/>
        <end position="35"/>
    </location>
</feature>
<dbReference type="EMBL" id="Z11929">
    <property type="protein sequence ID" value="CAA77986.1"/>
    <property type="molecule type" value="Genomic_DNA"/>
</dbReference>
<dbReference type="PIR" id="S25188">
    <property type="entry name" value="S25188"/>
</dbReference>
<dbReference type="SMR" id="P43160"/>
<dbReference type="GO" id="GO:0032993">
    <property type="term" value="C:protein-DNA complex"/>
    <property type="evidence" value="ECO:0007669"/>
    <property type="project" value="TreeGrafter"/>
</dbReference>
<dbReference type="GO" id="GO:0003677">
    <property type="term" value="F:DNA binding"/>
    <property type="evidence" value="ECO:0007669"/>
    <property type="project" value="UniProtKB-KW"/>
</dbReference>
<dbReference type="GO" id="GO:0003700">
    <property type="term" value="F:DNA-binding transcription factor activity"/>
    <property type="evidence" value="ECO:0007669"/>
    <property type="project" value="InterPro"/>
</dbReference>
<dbReference type="Gene3D" id="3.40.190.10">
    <property type="entry name" value="Periplasmic binding protein-like II"/>
    <property type="match status" value="2"/>
</dbReference>
<dbReference type="Gene3D" id="1.10.10.10">
    <property type="entry name" value="Winged helix-like DNA-binding domain superfamily/Winged helix DNA-binding domain"/>
    <property type="match status" value="1"/>
</dbReference>
<dbReference type="InterPro" id="IPR005119">
    <property type="entry name" value="LysR_subst-bd"/>
</dbReference>
<dbReference type="InterPro" id="IPR000847">
    <property type="entry name" value="Tscrpt_reg_HTH_LysR"/>
</dbReference>
<dbReference type="InterPro" id="IPR036388">
    <property type="entry name" value="WH-like_DNA-bd_sf"/>
</dbReference>
<dbReference type="InterPro" id="IPR036390">
    <property type="entry name" value="WH_DNA-bd_sf"/>
</dbReference>
<dbReference type="PANTHER" id="PTHR30346:SF30">
    <property type="entry name" value="SMALL NEUTRAL PROTEASE REGULATORY PROTEIN"/>
    <property type="match status" value="1"/>
</dbReference>
<dbReference type="PANTHER" id="PTHR30346">
    <property type="entry name" value="TRANSCRIPTIONAL DUAL REGULATOR HCAR-RELATED"/>
    <property type="match status" value="1"/>
</dbReference>
<dbReference type="Pfam" id="PF00126">
    <property type="entry name" value="HTH_1"/>
    <property type="match status" value="1"/>
</dbReference>
<dbReference type="Pfam" id="PF03466">
    <property type="entry name" value="LysR_substrate"/>
    <property type="match status" value="1"/>
</dbReference>
<dbReference type="PRINTS" id="PR00039">
    <property type="entry name" value="HTHLYSR"/>
</dbReference>
<dbReference type="SUPFAM" id="SSF53850">
    <property type="entry name" value="Periplasmic binding protein-like II"/>
    <property type="match status" value="1"/>
</dbReference>
<dbReference type="SUPFAM" id="SSF46785">
    <property type="entry name" value="Winged helix' DNA-binding domain"/>
    <property type="match status" value="1"/>
</dbReference>
<dbReference type="PROSITE" id="PS50931">
    <property type="entry name" value="HTH_LYSR"/>
    <property type="match status" value="1"/>
</dbReference>
<evidence type="ECO:0000255" key="1">
    <source>
        <dbReference type="PROSITE-ProRule" id="PRU00253"/>
    </source>
</evidence>
<evidence type="ECO:0000305" key="2"/>
<reference key="1">
    <citation type="journal article" date="1992" name="Mol. Microbiol.">
        <title>A metalloprotease gene from Streptomyces coelicolor 'Muller' and its transcriptional activator, a member of the LysR family.</title>
        <authorList>
            <person name="Dammann T."/>
            <person name="Wohlleben W."/>
        </authorList>
    </citation>
    <scope>NUCLEOTIDE SEQUENCE [GENOMIC DNA]</scope>
    <source>
        <strain>DSM 3030 / Mueller</strain>
    </source>
</reference>
<comment type="function">
    <text>Transcriptional trans-activator of the gene (mprA) for the small neutral protease.</text>
</comment>
<comment type="similarity">
    <text evidence="2">Belongs to the LysR transcriptional regulatory family.</text>
</comment>
<keyword id="KW-0010">Activator</keyword>
<keyword id="KW-0238">DNA-binding</keyword>
<keyword id="KW-0804">Transcription</keyword>
<keyword id="KW-0805">Transcription regulation</keyword>